<protein>
    <recommendedName>
        <fullName>Cylicin-2</fullName>
    </recommendedName>
    <alternativeName>
        <fullName>Cylicin II</fullName>
    </alternativeName>
    <alternativeName>
        <fullName>Multiple-band polypeptide II</fullName>
    </alternativeName>
</protein>
<keyword id="KW-0963">Cytoplasm</keyword>
<keyword id="KW-0206">Cytoskeleton</keyword>
<keyword id="KW-0217">Developmental protein</keyword>
<keyword id="KW-0221">Differentiation</keyword>
<keyword id="KW-1267">Proteomics identification</keyword>
<keyword id="KW-1185">Reference proteome</keyword>
<keyword id="KW-0677">Repeat</keyword>
<keyword id="KW-0744">Spermatogenesis</keyword>
<comment type="function">
    <text evidence="1">Plays a role in the establishment of normal sperm morphology during spermatogenesis. It is required for acrosome attachment to the nuclear envelope, and proper manchette elongation and disassembly.</text>
</comment>
<comment type="subcellular location">
    <subcellularLocation>
        <location evidence="1">Cytoplasm</location>
        <location evidence="1">Cytoskeleton</location>
        <location evidence="1">Perinuclear theca</location>
        <location evidence="1">Calyx</location>
    </subcellularLocation>
    <subcellularLocation>
        <location evidence="1">Cytoplasm</location>
        <location evidence="1">Cytoskeleton</location>
        <location evidence="1">Perinuclear theca</location>
    </subcellularLocation>
    <text evidence="1">Localizes to the subacrosomal layer of the perinuclear theca in round and elongating spermatids. Localizes to the calyx, also known as post-acrosomal region, in spermatozoa.</text>
</comment>
<comment type="tissue specificity">
    <text evidence="4">Testis.</text>
</comment>
<proteinExistence type="evidence at protein level"/>
<gene>
    <name type="primary">CYLC2</name>
    <name type="synonym">CYL2</name>
</gene>
<evidence type="ECO:0000250" key="1">
    <source>
        <dbReference type="UniProtKB" id="A0A571BEE2"/>
    </source>
</evidence>
<evidence type="ECO:0000256" key="2">
    <source>
        <dbReference type="SAM" id="MobiDB-lite"/>
    </source>
</evidence>
<evidence type="ECO:0000269" key="3">
    <source>
    </source>
</evidence>
<evidence type="ECO:0000269" key="4">
    <source>
    </source>
</evidence>
<sequence>MSLPRFQRVNFGPYDNYIPVSELSKKSWNQQHFALLFPKPQRPGTKRRSKPSQIRDNTVSIIDEEQLRGDRRQPLWMYRSLMRISERPSVYLAARRQPLKPTRTVEVDSKAAEIGKKGEDKTTQKDTTDSESELKQGKKDSKKGKDIEKGKEEKLDAKKDSKKGKKDAEKGKDSATESEDEKGGAKKDNKKDKKDSNKGKDSATESEGEKGGTEKDSKKGKKDSKKGKDSAIELQAVKADEKKDEDGKKDANKGDESKDAKKDAKEIKKGKKDKKKPSSTDSDSKDDVKKESKKDATKDAKKVAKKDTEKESADSKKDAKKNAKKDAKKDAKKNAKKDEKKDAKKKGK</sequence>
<reference key="1">
    <citation type="journal article" date="1995" name="Exp. Cell Res.">
        <title>The protein complexity of the cytoskeleton of bovine and human sperm heads: the identification and characterization of cylicin II.</title>
        <authorList>
            <person name="Hess H."/>
            <person name="Heid H."/>
            <person name="Zimbelmann R."/>
            <person name="Franke W.W."/>
        </authorList>
    </citation>
    <scope>NUCLEOTIDE SEQUENCE [MRNA]</scope>
    <scope>TISSUE SPECIFICITY</scope>
    <source>
        <tissue>Testis</tissue>
    </source>
</reference>
<reference key="2">
    <citation type="journal article" date="2004" name="Nat. Genet.">
        <title>Complete sequencing and characterization of 21,243 full-length human cDNAs.</title>
        <authorList>
            <person name="Ota T."/>
            <person name="Suzuki Y."/>
            <person name="Nishikawa T."/>
            <person name="Otsuki T."/>
            <person name="Sugiyama T."/>
            <person name="Irie R."/>
            <person name="Wakamatsu A."/>
            <person name="Hayashi K."/>
            <person name="Sato H."/>
            <person name="Nagai K."/>
            <person name="Kimura K."/>
            <person name="Makita H."/>
            <person name="Sekine M."/>
            <person name="Obayashi M."/>
            <person name="Nishi T."/>
            <person name="Shibahara T."/>
            <person name="Tanaka T."/>
            <person name="Ishii S."/>
            <person name="Yamamoto J."/>
            <person name="Saito K."/>
            <person name="Kawai Y."/>
            <person name="Isono Y."/>
            <person name="Nakamura Y."/>
            <person name="Nagahari K."/>
            <person name="Murakami K."/>
            <person name="Yasuda T."/>
            <person name="Iwayanagi T."/>
            <person name="Wagatsuma M."/>
            <person name="Shiratori A."/>
            <person name="Sudo H."/>
            <person name="Hosoiri T."/>
            <person name="Kaku Y."/>
            <person name="Kodaira H."/>
            <person name="Kondo H."/>
            <person name="Sugawara M."/>
            <person name="Takahashi M."/>
            <person name="Kanda K."/>
            <person name="Yokoi T."/>
            <person name="Furuya T."/>
            <person name="Kikkawa E."/>
            <person name="Omura Y."/>
            <person name="Abe K."/>
            <person name="Kamihara K."/>
            <person name="Katsuta N."/>
            <person name="Sato K."/>
            <person name="Tanikawa M."/>
            <person name="Yamazaki M."/>
            <person name="Ninomiya K."/>
            <person name="Ishibashi T."/>
            <person name="Yamashita H."/>
            <person name="Murakawa K."/>
            <person name="Fujimori K."/>
            <person name="Tanai H."/>
            <person name="Kimata M."/>
            <person name="Watanabe M."/>
            <person name="Hiraoka S."/>
            <person name="Chiba Y."/>
            <person name="Ishida S."/>
            <person name="Ono Y."/>
            <person name="Takiguchi S."/>
            <person name="Watanabe S."/>
            <person name="Yosida M."/>
            <person name="Hotuta T."/>
            <person name="Kusano J."/>
            <person name="Kanehori K."/>
            <person name="Takahashi-Fujii A."/>
            <person name="Hara H."/>
            <person name="Tanase T.-O."/>
            <person name="Nomura Y."/>
            <person name="Togiya S."/>
            <person name="Komai F."/>
            <person name="Hara R."/>
            <person name="Takeuchi K."/>
            <person name="Arita M."/>
            <person name="Imose N."/>
            <person name="Musashino K."/>
            <person name="Yuuki H."/>
            <person name="Oshima A."/>
            <person name="Sasaki N."/>
            <person name="Aotsuka S."/>
            <person name="Yoshikawa Y."/>
            <person name="Matsunawa H."/>
            <person name="Ichihara T."/>
            <person name="Shiohata N."/>
            <person name="Sano S."/>
            <person name="Moriya S."/>
            <person name="Momiyama H."/>
            <person name="Satoh N."/>
            <person name="Takami S."/>
            <person name="Terashima Y."/>
            <person name="Suzuki O."/>
            <person name="Nakagawa S."/>
            <person name="Senoh A."/>
            <person name="Mizoguchi H."/>
            <person name="Goto Y."/>
            <person name="Shimizu F."/>
            <person name="Wakebe H."/>
            <person name="Hishigaki H."/>
            <person name="Watanabe T."/>
            <person name="Sugiyama A."/>
            <person name="Takemoto M."/>
            <person name="Kawakami B."/>
            <person name="Yamazaki M."/>
            <person name="Watanabe K."/>
            <person name="Kumagai A."/>
            <person name="Itakura S."/>
            <person name="Fukuzumi Y."/>
            <person name="Fujimori Y."/>
            <person name="Komiyama M."/>
            <person name="Tashiro H."/>
            <person name="Tanigami A."/>
            <person name="Fujiwara T."/>
            <person name="Ono T."/>
            <person name="Yamada K."/>
            <person name="Fujii Y."/>
            <person name="Ozaki K."/>
            <person name="Hirao M."/>
            <person name="Ohmori Y."/>
            <person name="Kawabata A."/>
            <person name="Hikiji T."/>
            <person name="Kobatake N."/>
            <person name="Inagaki H."/>
            <person name="Ikema Y."/>
            <person name="Okamoto S."/>
            <person name="Okitani R."/>
            <person name="Kawakami T."/>
            <person name="Noguchi S."/>
            <person name="Itoh T."/>
            <person name="Shigeta K."/>
            <person name="Senba T."/>
            <person name="Matsumura K."/>
            <person name="Nakajima Y."/>
            <person name="Mizuno T."/>
            <person name="Morinaga M."/>
            <person name="Sasaki M."/>
            <person name="Togashi T."/>
            <person name="Oyama M."/>
            <person name="Hata H."/>
            <person name="Watanabe M."/>
            <person name="Komatsu T."/>
            <person name="Mizushima-Sugano J."/>
            <person name="Satoh T."/>
            <person name="Shirai Y."/>
            <person name="Takahashi Y."/>
            <person name="Nakagawa K."/>
            <person name="Okumura K."/>
            <person name="Nagase T."/>
            <person name="Nomura N."/>
            <person name="Kikuchi H."/>
            <person name="Masuho Y."/>
            <person name="Yamashita R."/>
            <person name="Nakai K."/>
            <person name="Yada T."/>
            <person name="Nakamura Y."/>
            <person name="Ohara O."/>
            <person name="Isogai T."/>
            <person name="Sugano S."/>
        </authorList>
    </citation>
    <scope>NUCLEOTIDE SEQUENCE [LARGE SCALE MRNA]</scope>
    <source>
        <tissue>Testis</tissue>
    </source>
</reference>
<reference key="3">
    <citation type="journal article" date="2004" name="Nature">
        <title>DNA sequence and analysis of human chromosome 9.</title>
        <authorList>
            <person name="Humphray S.J."/>
            <person name="Oliver K."/>
            <person name="Hunt A.R."/>
            <person name="Plumb R.W."/>
            <person name="Loveland J.E."/>
            <person name="Howe K.L."/>
            <person name="Andrews T.D."/>
            <person name="Searle S."/>
            <person name="Hunt S.E."/>
            <person name="Scott C.E."/>
            <person name="Jones M.C."/>
            <person name="Ainscough R."/>
            <person name="Almeida J.P."/>
            <person name="Ambrose K.D."/>
            <person name="Ashwell R.I.S."/>
            <person name="Babbage A.K."/>
            <person name="Babbage S."/>
            <person name="Bagguley C.L."/>
            <person name="Bailey J."/>
            <person name="Banerjee R."/>
            <person name="Barker D.J."/>
            <person name="Barlow K.F."/>
            <person name="Bates K."/>
            <person name="Beasley H."/>
            <person name="Beasley O."/>
            <person name="Bird C.P."/>
            <person name="Bray-Allen S."/>
            <person name="Brown A.J."/>
            <person name="Brown J.Y."/>
            <person name="Burford D."/>
            <person name="Burrill W."/>
            <person name="Burton J."/>
            <person name="Carder C."/>
            <person name="Carter N.P."/>
            <person name="Chapman J.C."/>
            <person name="Chen Y."/>
            <person name="Clarke G."/>
            <person name="Clark S.Y."/>
            <person name="Clee C.M."/>
            <person name="Clegg S."/>
            <person name="Collier R.E."/>
            <person name="Corby N."/>
            <person name="Crosier M."/>
            <person name="Cummings A.T."/>
            <person name="Davies J."/>
            <person name="Dhami P."/>
            <person name="Dunn M."/>
            <person name="Dutta I."/>
            <person name="Dyer L.W."/>
            <person name="Earthrowl M.E."/>
            <person name="Faulkner L."/>
            <person name="Fleming C.J."/>
            <person name="Frankish A."/>
            <person name="Frankland J.A."/>
            <person name="French L."/>
            <person name="Fricker D.G."/>
            <person name="Garner P."/>
            <person name="Garnett J."/>
            <person name="Ghori J."/>
            <person name="Gilbert J.G.R."/>
            <person name="Glison C."/>
            <person name="Grafham D.V."/>
            <person name="Gribble S."/>
            <person name="Griffiths C."/>
            <person name="Griffiths-Jones S."/>
            <person name="Grocock R."/>
            <person name="Guy J."/>
            <person name="Hall R.E."/>
            <person name="Hammond S."/>
            <person name="Harley J.L."/>
            <person name="Harrison E.S.I."/>
            <person name="Hart E.A."/>
            <person name="Heath P.D."/>
            <person name="Henderson C.D."/>
            <person name="Hopkins B.L."/>
            <person name="Howard P.J."/>
            <person name="Howden P.J."/>
            <person name="Huckle E."/>
            <person name="Johnson C."/>
            <person name="Johnson D."/>
            <person name="Joy A.A."/>
            <person name="Kay M."/>
            <person name="Keenan S."/>
            <person name="Kershaw J.K."/>
            <person name="Kimberley A.M."/>
            <person name="King A."/>
            <person name="Knights A."/>
            <person name="Laird G.K."/>
            <person name="Langford C."/>
            <person name="Lawlor S."/>
            <person name="Leongamornlert D.A."/>
            <person name="Leversha M."/>
            <person name="Lloyd C."/>
            <person name="Lloyd D.M."/>
            <person name="Lovell J."/>
            <person name="Martin S."/>
            <person name="Mashreghi-Mohammadi M."/>
            <person name="Matthews L."/>
            <person name="McLaren S."/>
            <person name="McLay K.E."/>
            <person name="McMurray A."/>
            <person name="Milne S."/>
            <person name="Nickerson T."/>
            <person name="Nisbett J."/>
            <person name="Nordsiek G."/>
            <person name="Pearce A.V."/>
            <person name="Peck A.I."/>
            <person name="Porter K.M."/>
            <person name="Pandian R."/>
            <person name="Pelan S."/>
            <person name="Phillimore B."/>
            <person name="Povey S."/>
            <person name="Ramsey Y."/>
            <person name="Rand V."/>
            <person name="Scharfe M."/>
            <person name="Sehra H.K."/>
            <person name="Shownkeen R."/>
            <person name="Sims S.K."/>
            <person name="Skuce C.D."/>
            <person name="Smith M."/>
            <person name="Steward C.A."/>
            <person name="Swarbreck D."/>
            <person name="Sycamore N."/>
            <person name="Tester J."/>
            <person name="Thorpe A."/>
            <person name="Tracey A."/>
            <person name="Tromans A."/>
            <person name="Thomas D.W."/>
            <person name="Wall M."/>
            <person name="Wallis J.M."/>
            <person name="West A.P."/>
            <person name="Whitehead S.L."/>
            <person name="Willey D.L."/>
            <person name="Williams S.A."/>
            <person name="Wilming L."/>
            <person name="Wray P.W."/>
            <person name="Young L."/>
            <person name="Ashurst J.L."/>
            <person name="Coulson A."/>
            <person name="Blocker H."/>
            <person name="Durbin R.M."/>
            <person name="Sulston J.E."/>
            <person name="Hubbard T."/>
            <person name="Jackson M.J."/>
            <person name="Bentley D.R."/>
            <person name="Beck S."/>
            <person name="Rogers J."/>
            <person name="Dunham I."/>
        </authorList>
    </citation>
    <scope>NUCLEOTIDE SEQUENCE [LARGE SCALE GENOMIC DNA]</scope>
</reference>
<reference key="4">
    <citation type="journal article" date="2004" name="Genome Res.">
        <title>The status, quality, and expansion of the NIH full-length cDNA project: the Mammalian Gene Collection (MGC).</title>
        <authorList>
            <consortium name="The MGC Project Team"/>
        </authorList>
    </citation>
    <scope>NUCLEOTIDE SEQUENCE [LARGE SCALE MRNA]</scope>
</reference>
<reference key="5">
    <citation type="journal article" date="2023" name="Elife">
        <title>Cylicins are a structural component of the sperm calyx being indispensable for male fertility in mice and human.</title>
        <authorList>
            <person name="Schneider S."/>
            <person name="Kovacevic A."/>
            <person name="Mayer M."/>
            <person name="Dicke A.K."/>
            <person name="Arevalo L."/>
            <person name="Koser S.A."/>
            <person name="Hansen J.N."/>
            <person name="Young S."/>
            <person name="Brenker C."/>
            <person name="Kliesch S."/>
            <person name="Wachten D."/>
            <person name="Kirfel G."/>
            <person name="Struenker T."/>
            <person name="Tuettelmann F."/>
            <person name="Schorle H."/>
        </authorList>
    </citation>
    <scope>VARIANT ASP-184</scope>
</reference>
<name>CYLC2_HUMAN</name>
<accession>Q14093</accession>
<accession>B2R8F4</accession>
<accession>Q5VVJ9</accession>
<organism>
    <name type="scientific">Homo sapiens</name>
    <name type="common">Human</name>
    <dbReference type="NCBI Taxonomy" id="9606"/>
    <lineage>
        <taxon>Eukaryota</taxon>
        <taxon>Metazoa</taxon>
        <taxon>Chordata</taxon>
        <taxon>Craniata</taxon>
        <taxon>Vertebrata</taxon>
        <taxon>Euteleostomi</taxon>
        <taxon>Mammalia</taxon>
        <taxon>Eutheria</taxon>
        <taxon>Euarchontoglires</taxon>
        <taxon>Primates</taxon>
        <taxon>Haplorrhini</taxon>
        <taxon>Catarrhini</taxon>
        <taxon>Hominidae</taxon>
        <taxon>Homo</taxon>
    </lineage>
</organism>
<feature type="chain" id="PRO_0000079755" description="Cylicin-2">
    <location>
        <begin position="1"/>
        <end position="348"/>
    </location>
</feature>
<feature type="repeat" description="1">
    <location>
        <begin position="157"/>
        <end position="184"/>
    </location>
</feature>
<feature type="repeat" description="2">
    <location>
        <begin position="185"/>
        <end position="212"/>
    </location>
</feature>
<feature type="repeat" description="3">
    <location>
        <begin position="213"/>
        <end position="240"/>
    </location>
</feature>
<feature type="region of interest" description="31 X 3 AA repeats of K-K-X">
    <location>
        <begin position="25"/>
        <end position="347"/>
    </location>
</feature>
<feature type="region of interest" description="Disordered" evidence="2">
    <location>
        <begin position="35"/>
        <end position="59"/>
    </location>
</feature>
<feature type="region of interest" description="Disordered" evidence="2">
    <location>
        <begin position="101"/>
        <end position="348"/>
    </location>
</feature>
<feature type="region of interest" description="3 X approximate tandem repeats">
    <location>
        <begin position="157"/>
        <end position="240"/>
    </location>
</feature>
<feature type="compositionally biased region" description="Basic and acidic residues" evidence="2">
    <location>
        <begin position="103"/>
        <end position="159"/>
    </location>
</feature>
<feature type="compositionally biased region" description="Basic and acidic residues" evidence="2">
    <location>
        <begin position="166"/>
        <end position="217"/>
    </location>
</feature>
<feature type="compositionally biased region" description="Basic and acidic residues" evidence="2">
    <location>
        <begin position="238"/>
        <end position="267"/>
    </location>
</feature>
<feature type="compositionally biased region" description="Basic and acidic residues" evidence="2">
    <location>
        <begin position="276"/>
        <end position="342"/>
    </location>
</feature>
<feature type="sequence variant" id="VAR_050938" description="In dbSNP:rs13293961.">
    <original>D</original>
    <variation>Y</variation>
    <location>
        <position position="146"/>
    </location>
</feature>
<feature type="sequence variant" id="VAR_050939" description="Found in a patient with male infertility also carrying a variant in CYLC1; uncertain significance; dbSNP:rs10990424." evidence="3">
    <original>G</original>
    <variation>D</variation>
    <location>
        <position position="184"/>
    </location>
</feature>
<feature type="sequence variant" id="VAR_020100" description="In dbSNP:rs2298050.">
    <original>K</original>
    <variation>E</variation>
    <location>
        <position position="190"/>
    </location>
</feature>
<feature type="sequence variant" id="VAR_020101" description="In dbSNP:rs2298051.">
    <original>G</original>
    <variation>D</variation>
    <location>
        <position position="208"/>
    </location>
</feature>
<feature type="sequence variant" id="VAR_020102" description="In dbSNP:rs3763636.">
    <original>A</original>
    <variation>E</variation>
    <location>
        <position position="319"/>
    </location>
</feature>
<dbReference type="EMBL" id="Z46788">
    <property type="protein sequence ID" value="CAA86752.1"/>
    <property type="molecule type" value="mRNA"/>
</dbReference>
<dbReference type="EMBL" id="AK313349">
    <property type="protein sequence ID" value="BAG36151.1"/>
    <property type="molecule type" value="mRNA"/>
</dbReference>
<dbReference type="EMBL" id="AL449304">
    <property type="status" value="NOT_ANNOTATED_CDS"/>
    <property type="molecule type" value="Genomic_DNA"/>
</dbReference>
<dbReference type="EMBL" id="BC114547">
    <property type="protein sequence ID" value="AAI14548.1"/>
    <property type="molecule type" value="mRNA"/>
</dbReference>
<dbReference type="CCDS" id="CCDS35085.1"/>
<dbReference type="PIR" id="I37271">
    <property type="entry name" value="I37271"/>
</dbReference>
<dbReference type="RefSeq" id="NP_001331.1">
    <property type="nucleotide sequence ID" value="NM_001340.5"/>
</dbReference>
<dbReference type="BioGRID" id="107919">
    <property type="interactions" value="27"/>
</dbReference>
<dbReference type="FunCoup" id="Q14093">
    <property type="interactions" value="10"/>
</dbReference>
<dbReference type="IntAct" id="Q14093">
    <property type="interactions" value="15"/>
</dbReference>
<dbReference type="MINT" id="Q14093"/>
<dbReference type="STRING" id="9606.ENSP00000420256"/>
<dbReference type="GlyGen" id="Q14093">
    <property type="glycosylation" value="1 site, 1 O-linked glycan (1 site)"/>
</dbReference>
<dbReference type="iPTMnet" id="Q14093"/>
<dbReference type="PhosphoSitePlus" id="Q14093"/>
<dbReference type="BioMuta" id="CYLC2"/>
<dbReference type="DMDM" id="2498278"/>
<dbReference type="MassIVE" id="Q14093"/>
<dbReference type="PaxDb" id="9606-ENSP00000420256"/>
<dbReference type="PeptideAtlas" id="Q14093"/>
<dbReference type="ProteomicsDB" id="59808"/>
<dbReference type="Antibodypedia" id="29199">
    <property type="antibodies" value="84 antibodies from 23 providers"/>
</dbReference>
<dbReference type="DNASU" id="1539"/>
<dbReference type="Ensembl" id="ENST00000374798.8">
    <property type="protein sequence ID" value="ENSP00000420256.1"/>
    <property type="gene ID" value="ENSG00000155833.15"/>
</dbReference>
<dbReference type="Ensembl" id="ENST00000487798.5">
    <property type="protein sequence ID" value="ENSP00000417674.1"/>
    <property type="gene ID" value="ENSG00000155833.15"/>
</dbReference>
<dbReference type="Ensembl" id="ENST00000612124.4">
    <property type="protein sequence ID" value="ENSP00000478399.1"/>
    <property type="gene ID" value="ENSG00000155833.15"/>
</dbReference>
<dbReference type="GeneID" id="1539"/>
<dbReference type="KEGG" id="hsa:1539"/>
<dbReference type="MANE-Select" id="ENST00000374798.8">
    <property type="protein sequence ID" value="ENSP00000420256.1"/>
    <property type="RefSeq nucleotide sequence ID" value="NM_001340.5"/>
    <property type="RefSeq protein sequence ID" value="NP_001331.1"/>
</dbReference>
<dbReference type="UCSC" id="uc004bbs.2">
    <property type="organism name" value="human"/>
</dbReference>
<dbReference type="AGR" id="HGNC:2583"/>
<dbReference type="CTD" id="1539"/>
<dbReference type="DisGeNET" id="1539"/>
<dbReference type="GeneCards" id="CYLC2"/>
<dbReference type="HGNC" id="HGNC:2583">
    <property type="gene designation" value="CYLC2"/>
</dbReference>
<dbReference type="HPA" id="ENSG00000155833">
    <property type="expression patterns" value="Tissue enriched (testis)"/>
</dbReference>
<dbReference type="MIM" id="604035">
    <property type="type" value="gene"/>
</dbReference>
<dbReference type="neXtProt" id="NX_Q14093"/>
<dbReference type="OpenTargets" id="ENSG00000155833"/>
<dbReference type="PharmGKB" id="PA27083"/>
<dbReference type="VEuPathDB" id="HostDB:ENSG00000155833"/>
<dbReference type="eggNOG" id="ENOG502SY9T">
    <property type="taxonomic scope" value="Eukaryota"/>
</dbReference>
<dbReference type="GeneTree" id="ENSGT00730000111075"/>
<dbReference type="HOGENOM" id="CLU_055233_0_0_1"/>
<dbReference type="InParanoid" id="Q14093"/>
<dbReference type="OMA" id="HRQPLWM"/>
<dbReference type="OrthoDB" id="9838454at2759"/>
<dbReference type="PAN-GO" id="Q14093">
    <property type="GO annotations" value="0 GO annotations based on evolutionary models"/>
</dbReference>
<dbReference type="PhylomeDB" id="Q14093"/>
<dbReference type="TreeFam" id="TF337809"/>
<dbReference type="PathwayCommons" id="Q14093"/>
<dbReference type="SignaLink" id="Q14093"/>
<dbReference type="BioGRID-ORCS" id="1539">
    <property type="hits" value="11 hits in 1145 CRISPR screens"/>
</dbReference>
<dbReference type="ChiTaRS" id="CYLC2">
    <property type="organism name" value="human"/>
</dbReference>
<dbReference type="GenomeRNAi" id="1539"/>
<dbReference type="Pharos" id="Q14093">
    <property type="development level" value="Tbio"/>
</dbReference>
<dbReference type="PRO" id="PR:Q14093"/>
<dbReference type="Proteomes" id="UP000005640">
    <property type="component" value="Chromosome 9"/>
</dbReference>
<dbReference type="RNAct" id="Q14093">
    <property type="molecule type" value="protein"/>
</dbReference>
<dbReference type="Bgee" id="ENSG00000155833">
    <property type="expression patterns" value="Expressed in sperm and 101 other cell types or tissues"/>
</dbReference>
<dbReference type="ExpressionAtlas" id="Q14093">
    <property type="expression patterns" value="baseline and differential"/>
</dbReference>
<dbReference type="GO" id="GO:0033150">
    <property type="term" value="C:cytoskeletal calyx"/>
    <property type="evidence" value="ECO:0007669"/>
    <property type="project" value="UniProtKB-SubCell"/>
</dbReference>
<dbReference type="GO" id="GO:0005634">
    <property type="term" value="C:nucleus"/>
    <property type="evidence" value="ECO:0007005"/>
    <property type="project" value="UniProtKB"/>
</dbReference>
<dbReference type="GO" id="GO:0005200">
    <property type="term" value="F:structural constituent of cytoskeleton"/>
    <property type="evidence" value="ECO:0000304"/>
    <property type="project" value="ProtInc"/>
</dbReference>
<dbReference type="GO" id="GO:0030154">
    <property type="term" value="P:cell differentiation"/>
    <property type="evidence" value="ECO:0007669"/>
    <property type="project" value="UniProtKB-KW"/>
</dbReference>
<dbReference type="GO" id="GO:0007283">
    <property type="term" value="P:spermatogenesis"/>
    <property type="evidence" value="ECO:0000315"/>
    <property type="project" value="UniProtKB"/>
</dbReference>
<dbReference type="InterPro" id="IPR026189">
    <property type="entry name" value="CYLC"/>
</dbReference>
<dbReference type="InterPro" id="IPR029354">
    <property type="entry name" value="Cylicin_N"/>
</dbReference>
<dbReference type="PANTHER" id="PTHR16742">
    <property type="entry name" value="CYCLICIN"/>
    <property type="match status" value="1"/>
</dbReference>
<dbReference type="PANTHER" id="PTHR16742:SF2">
    <property type="entry name" value="CYLICIN-2"/>
    <property type="match status" value="1"/>
</dbReference>
<dbReference type="Pfam" id="PF15241">
    <property type="entry name" value="Cylicin_N"/>
    <property type="match status" value="1"/>
</dbReference>